<proteinExistence type="inferred from homology"/>
<sequence length="220" mass="24635">MADSVHLNRRGVLFVLSSPSGAGKTTISRMMLEEDKDIALSVSATTRPPRPGEIDGVHYHFVDTDTFKKMAADGAFLEWAHVFGHRYGTPRAPVEELLAAGKDVLFDIDWQGAQQLYQEAGPDVVRVFVLPPTMEELERRLRARGTDSDEVIAARMARAANEISHWDGYDYVLINDHVGECYGEVMAILRAERLKRRRQIGLIGFARDLIRSVPDADTKL</sequence>
<gene>
    <name evidence="1" type="primary">gmk</name>
    <name type="ordered locus">Sala_3155</name>
</gene>
<name>KGUA_SPHAL</name>
<protein>
    <recommendedName>
        <fullName evidence="1">Guanylate kinase</fullName>
        <ecNumber evidence="1">2.7.4.8</ecNumber>
    </recommendedName>
    <alternativeName>
        <fullName evidence="1">GMP kinase</fullName>
    </alternativeName>
</protein>
<reference key="1">
    <citation type="journal article" date="2009" name="Proc. Natl. Acad. Sci. U.S.A.">
        <title>The genomic basis of trophic strategy in marine bacteria.</title>
        <authorList>
            <person name="Lauro F.M."/>
            <person name="McDougald D."/>
            <person name="Thomas T."/>
            <person name="Williams T.J."/>
            <person name="Egan S."/>
            <person name="Rice S."/>
            <person name="DeMaere M.Z."/>
            <person name="Ting L."/>
            <person name="Ertan H."/>
            <person name="Johnson J."/>
            <person name="Ferriera S."/>
            <person name="Lapidus A."/>
            <person name="Anderson I."/>
            <person name="Kyrpides N."/>
            <person name="Munk A.C."/>
            <person name="Detter C."/>
            <person name="Han C.S."/>
            <person name="Brown M.V."/>
            <person name="Robb F.T."/>
            <person name="Kjelleberg S."/>
            <person name="Cavicchioli R."/>
        </authorList>
    </citation>
    <scope>NUCLEOTIDE SEQUENCE [LARGE SCALE GENOMIC DNA]</scope>
    <source>
        <strain>DSM 13593 / LMG 18877 / RB2256</strain>
    </source>
</reference>
<evidence type="ECO:0000255" key="1">
    <source>
        <dbReference type="HAMAP-Rule" id="MF_00328"/>
    </source>
</evidence>
<organism>
    <name type="scientific">Sphingopyxis alaskensis (strain DSM 13593 / LMG 18877 / RB2256)</name>
    <name type="common">Sphingomonas alaskensis</name>
    <dbReference type="NCBI Taxonomy" id="317655"/>
    <lineage>
        <taxon>Bacteria</taxon>
        <taxon>Pseudomonadati</taxon>
        <taxon>Pseudomonadota</taxon>
        <taxon>Alphaproteobacteria</taxon>
        <taxon>Sphingomonadales</taxon>
        <taxon>Sphingomonadaceae</taxon>
        <taxon>Sphingopyxis</taxon>
    </lineage>
</organism>
<dbReference type="EC" id="2.7.4.8" evidence="1"/>
<dbReference type="EMBL" id="CP000356">
    <property type="protein sequence ID" value="ABF54858.1"/>
    <property type="molecule type" value="Genomic_DNA"/>
</dbReference>
<dbReference type="RefSeq" id="WP_011543420.1">
    <property type="nucleotide sequence ID" value="NC_008048.1"/>
</dbReference>
<dbReference type="SMR" id="Q1GNB4"/>
<dbReference type="STRING" id="317655.Sala_3155"/>
<dbReference type="KEGG" id="sal:Sala_3155"/>
<dbReference type="eggNOG" id="COG0194">
    <property type="taxonomic scope" value="Bacteria"/>
</dbReference>
<dbReference type="HOGENOM" id="CLU_001715_1_0_5"/>
<dbReference type="OrthoDB" id="9808150at2"/>
<dbReference type="Proteomes" id="UP000006578">
    <property type="component" value="Chromosome"/>
</dbReference>
<dbReference type="GO" id="GO:0005829">
    <property type="term" value="C:cytosol"/>
    <property type="evidence" value="ECO:0007669"/>
    <property type="project" value="TreeGrafter"/>
</dbReference>
<dbReference type="GO" id="GO:0005524">
    <property type="term" value="F:ATP binding"/>
    <property type="evidence" value="ECO:0007669"/>
    <property type="project" value="UniProtKB-UniRule"/>
</dbReference>
<dbReference type="GO" id="GO:0004385">
    <property type="term" value="F:guanylate kinase activity"/>
    <property type="evidence" value="ECO:0007669"/>
    <property type="project" value="UniProtKB-UniRule"/>
</dbReference>
<dbReference type="CDD" id="cd00071">
    <property type="entry name" value="GMPK"/>
    <property type="match status" value="1"/>
</dbReference>
<dbReference type="FunFam" id="3.30.63.10:FF:000002">
    <property type="entry name" value="Guanylate kinase 1"/>
    <property type="match status" value="1"/>
</dbReference>
<dbReference type="Gene3D" id="3.30.63.10">
    <property type="entry name" value="Guanylate Kinase phosphate binding domain"/>
    <property type="match status" value="1"/>
</dbReference>
<dbReference type="Gene3D" id="3.40.50.300">
    <property type="entry name" value="P-loop containing nucleotide triphosphate hydrolases"/>
    <property type="match status" value="2"/>
</dbReference>
<dbReference type="HAMAP" id="MF_00328">
    <property type="entry name" value="Guanylate_kinase"/>
    <property type="match status" value="1"/>
</dbReference>
<dbReference type="InterPro" id="IPR008145">
    <property type="entry name" value="GK/Ca_channel_bsu"/>
</dbReference>
<dbReference type="InterPro" id="IPR008144">
    <property type="entry name" value="Guanylate_kin-like_dom"/>
</dbReference>
<dbReference type="InterPro" id="IPR017665">
    <property type="entry name" value="Guanylate_kinase"/>
</dbReference>
<dbReference type="InterPro" id="IPR020590">
    <property type="entry name" value="Guanylate_kinase_CS"/>
</dbReference>
<dbReference type="InterPro" id="IPR027417">
    <property type="entry name" value="P-loop_NTPase"/>
</dbReference>
<dbReference type="NCBIfam" id="TIGR03263">
    <property type="entry name" value="guanyl_kin"/>
    <property type="match status" value="1"/>
</dbReference>
<dbReference type="PANTHER" id="PTHR23117:SF13">
    <property type="entry name" value="GUANYLATE KINASE"/>
    <property type="match status" value="1"/>
</dbReference>
<dbReference type="PANTHER" id="PTHR23117">
    <property type="entry name" value="GUANYLATE KINASE-RELATED"/>
    <property type="match status" value="1"/>
</dbReference>
<dbReference type="Pfam" id="PF00625">
    <property type="entry name" value="Guanylate_kin"/>
    <property type="match status" value="1"/>
</dbReference>
<dbReference type="SMART" id="SM00072">
    <property type="entry name" value="GuKc"/>
    <property type="match status" value="1"/>
</dbReference>
<dbReference type="SUPFAM" id="SSF52540">
    <property type="entry name" value="P-loop containing nucleoside triphosphate hydrolases"/>
    <property type="match status" value="1"/>
</dbReference>
<dbReference type="PROSITE" id="PS00856">
    <property type="entry name" value="GUANYLATE_KINASE_1"/>
    <property type="match status" value="1"/>
</dbReference>
<dbReference type="PROSITE" id="PS50052">
    <property type="entry name" value="GUANYLATE_KINASE_2"/>
    <property type="match status" value="1"/>
</dbReference>
<feature type="chain" id="PRO_0000266406" description="Guanylate kinase">
    <location>
        <begin position="1"/>
        <end position="220"/>
    </location>
</feature>
<feature type="domain" description="Guanylate kinase-like" evidence="1">
    <location>
        <begin position="11"/>
        <end position="190"/>
    </location>
</feature>
<feature type="binding site" evidence="1">
    <location>
        <begin position="18"/>
        <end position="25"/>
    </location>
    <ligand>
        <name>ATP</name>
        <dbReference type="ChEBI" id="CHEBI:30616"/>
    </ligand>
</feature>
<keyword id="KW-0067">ATP-binding</keyword>
<keyword id="KW-0963">Cytoplasm</keyword>
<keyword id="KW-0418">Kinase</keyword>
<keyword id="KW-0547">Nucleotide-binding</keyword>
<keyword id="KW-1185">Reference proteome</keyword>
<keyword id="KW-0808">Transferase</keyword>
<comment type="function">
    <text evidence="1">Essential for recycling GMP and indirectly, cGMP.</text>
</comment>
<comment type="catalytic activity">
    <reaction evidence="1">
        <text>GMP + ATP = GDP + ADP</text>
        <dbReference type="Rhea" id="RHEA:20780"/>
        <dbReference type="ChEBI" id="CHEBI:30616"/>
        <dbReference type="ChEBI" id="CHEBI:58115"/>
        <dbReference type="ChEBI" id="CHEBI:58189"/>
        <dbReference type="ChEBI" id="CHEBI:456216"/>
        <dbReference type="EC" id="2.7.4.8"/>
    </reaction>
</comment>
<comment type="subcellular location">
    <subcellularLocation>
        <location evidence="1">Cytoplasm</location>
    </subcellularLocation>
</comment>
<comment type="similarity">
    <text evidence="1">Belongs to the guanylate kinase family.</text>
</comment>
<accession>Q1GNB4</accession>